<comment type="function">
    <text evidence="1">Anchors the catalytic components of the fumarate reductase complex to the cell membrane, binds quinones.</text>
</comment>
<comment type="subunit">
    <text evidence="1">Part of an enzyme complex containing four subunits: a flavoprotein (FrdA), an iron-sulfur protein (FrdB), and two hydrophobic anchor proteins (FrdC and FrdD).</text>
</comment>
<comment type="subcellular location">
    <subcellularLocation>
        <location evidence="1">Cell inner membrane</location>
        <topology evidence="1">Multi-pass membrane protein</topology>
    </subcellularLocation>
</comment>
<comment type="similarity">
    <text evidence="1">Belongs to the FrdC family.</text>
</comment>
<accession>Q9KNS3</accession>
<reference key="1">
    <citation type="journal article" date="2000" name="Nature">
        <title>DNA sequence of both chromosomes of the cholera pathogen Vibrio cholerae.</title>
        <authorList>
            <person name="Heidelberg J.F."/>
            <person name="Eisen J.A."/>
            <person name="Nelson W.C."/>
            <person name="Clayton R.A."/>
            <person name="Gwinn M.L."/>
            <person name="Dodson R.J."/>
            <person name="Haft D.H."/>
            <person name="Hickey E.K."/>
            <person name="Peterson J.D."/>
            <person name="Umayam L.A."/>
            <person name="Gill S.R."/>
            <person name="Nelson K.E."/>
            <person name="Read T.D."/>
            <person name="Tettelin H."/>
            <person name="Richardson D.L."/>
            <person name="Ermolaeva M.D."/>
            <person name="Vamathevan J.J."/>
            <person name="Bass S."/>
            <person name="Qin H."/>
            <person name="Dragoi I."/>
            <person name="Sellers P."/>
            <person name="McDonald L.A."/>
            <person name="Utterback T.R."/>
            <person name="Fleischmann R.D."/>
            <person name="Nierman W.C."/>
            <person name="White O."/>
            <person name="Salzberg S.L."/>
            <person name="Smith H.O."/>
            <person name="Colwell R.R."/>
            <person name="Mekalanos J.J."/>
            <person name="Venter J.C."/>
            <person name="Fraser C.M."/>
        </authorList>
    </citation>
    <scope>NUCLEOTIDE SEQUENCE [LARGE SCALE GENOMIC DNA]</scope>
    <source>
        <strain>ATCC 39315 / El Tor Inaba N16961</strain>
    </source>
</reference>
<protein>
    <recommendedName>
        <fullName evidence="1">Fumarate reductase subunit C</fullName>
    </recommendedName>
    <alternativeName>
        <fullName evidence="1">Quinol-fumarate reductase subunit C</fullName>
        <shortName evidence="1">QFR subunit C</shortName>
    </alternativeName>
</protein>
<sequence>MSNRKPYVREMKRTWWKDHPFYRFYMVREATVLPLILFTLFLTVGLGSLVKGPEAWQTWLDFMANPLVIAINLVALAGSLFHAQTFFSMMPQVVPIRLGGKLVDKKIIVLAQWAAVAFISLIVLIVV</sequence>
<gene>
    <name evidence="1" type="primary">frdC</name>
    <name type="ordered locus">VC_2658</name>
</gene>
<dbReference type="EMBL" id="AE003852">
    <property type="protein sequence ID" value="AAF95799.1"/>
    <property type="molecule type" value="Genomic_DNA"/>
</dbReference>
<dbReference type="PIR" id="H82050">
    <property type="entry name" value="H82050"/>
</dbReference>
<dbReference type="RefSeq" id="NP_232286.1">
    <property type="nucleotide sequence ID" value="NC_002505.1"/>
</dbReference>
<dbReference type="RefSeq" id="WP_000071094.1">
    <property type="nucleotide sequence ID" value="NZ_LT906614.1"/>
</dbReference>
<dbReference type="SMR" id="Q9KNS3"/>
<dbReference type="STRING" id="243277.VC_2658"/>
<dbReference type="DNASU" id="2615675"/>
<dbReference type="EnsemblBacteria" id="AAF95799">
    <property type="protein sequence ID" value="AAF95799"/>
    <property type="gene ID" value="VC_2658"/>
</dbReference>
<dbReference type="GeneID" id="88785213"/>
<dbReference type="KEGG" id="vch:VC_2658"/>
<dbReference type="PATRIC" id="fig|243277.26.peg.2534"/>
<dbReference type="eggNOG" id="COG3029">
    <property type="taxonomic scope" value="Bacteria"/>
</dbReference>
<dbReference type="HOGENOM" id="CLU_156492_0_0_6"/>
<dbReference type="Proteomes" id="UP000000584">
    <property type="component" value="Chromosome 1"/>
</dbReference>
<dbReference type="GO" id="GO:0045283">
    <property type="term" value="C:fumarate reductase complex"/>
    <property type="evidence" value="ECO:0007669"/>
    <property type="project" value="UniProtKB-UniRule"/>
</dbReference>
<dbReference type="GO" id="GO:0005886">
    <property type="term" value="C:plasma membrane"/>
    <property type="evidence" value="ECO:0007669"/>
    <property type="project" value="UniProtKB-SubCell"/>
</dbReference>
<dbReference type="GO" id="GO:0000104">
    <property type="term" value="F:succinate dehydrogenase activity"/>
    <property type="evidence" value="ECO:0007669"/>
    <property type="project" value="UniProtKB-UniRule"/>
</dbReference>
<dbReference type="CDD" id="cd00546">
    <property type="entry name" value="QFR_TypeD_subunitC"/>
    <property type="match status" value="1"/>
</dbReference>
<dbReference type="FunFam" id="1.20.1300.10:FF:000018">
    <property type="entry name" value="Fumarate reductase subunit C"/>
    <property type="match status" value="1"/>
</dbReference>
<dbReference type="Gene3D" id="1.20.1300.10">
    <property type="entry name" value="Fumarate reductase/succinate dehydrogenase, transmembrane subunit"/>
    <property type="match status" value="1"/>
</dbReference>
<dbReference type="HAMAP" id="MF_00708">
    <property type="entry name" value="Fumarate_red_C"/>
    <property type="match status" value="1"/>
</dbReference>
<dbReference type="InterPro" id="IPR003510">
    <property type="entry name" value="Fumarate_red_C"/>
</dbReference>
<dbReference type="InterPro" id="IPR034804">
    <property type="entry name" value="SQR/QFR_C/D"/>
</dbReference>
<dbReference type="NCBIfam" id="NF003445">
    <property type="entry name" value="PRK04987.1"/>
    <property type="match status" value="1"/>
</dbReference>
<dbReference type="Pfam" id="PF02300">
    <property type="entry name" value="Fumarate_red_C"/>
    <property type="match status" value="1"/>
</dbReference>
<dbReference type="PIRSF" id="PIRSF000180">
    <property type="entry name" value="FrdC"/>
    <property type="match status" value="1"/>
</dbReference>
<dbReference type="SUPFAM" id="SSF81343">
    <property type="entry name" value="Fumarate reductase respiratory complex transmembrane subunits"/>
    <property type="match status" value="1"/>
</dbReference>
<organism>
    <name type="scientific">Vibrio cholerae serotype O1 (strain ATCC 39315 / El Tor Inaba N16961)</name>
    <dbReference type="NCBI Taxonomy" id="243277"/>
    <lineage>
        <taxon>Bacteria</taxon>
        <taxon>Pseudomonadati</taxon>
        <taxon>Pseudomonadota</taxon>
        <taxon>Gammaproteobacteria</taxon>
        <taxon>Vibrionales</taxon>
        <taxon>Vibrionaceae</taxon>
        <taxon>Vibrio</taxon>
    </lineage>
</organism>
<feature type="chain" id="PRO_0000196537" description="Fumarate reductase subunit C">
    <location>
        <begin position="1"/>
        <end position="127"/>
    </location>
</feature>
<feature type="transmembrane region" description="Helical" evidence="1">
    <location>
        <begin position="30"/>
        <end position="50"/>
    </location>
</feature>
<feature type="transmembrane region" description="Helical" evidence="1">
    <location>
        <begin position="67"/>
        <end position="87"/>
    </location>
</feature>
<feature type="transmembrane region" description="Helical" evidence="1">
    <location>
        <begin position="107"/>
        <end position="127"/>
    </location>
</feature>
<keyword id="KW-0997">Cell inner membrane</keyword>
<keyword id="KW-1003">Cell membrane</keyword>
<keyword id="KW-0472">Membrane</keyword>
<keyword id="KW-1185">Reference proteome</keyword>
<keyword id="KW-0812">Transmembrane</keyword>
<keyword id="KW-1133">Transmembrane helix</keyword>
<evidence type="ECO:0000255" key="1">
    <source>
        <dbReference type="HAMAP-Rule" id="MF_00708"/>
    </source>
</evidence>
<proteinExistence type="inferred from homology"/>
<name>FRDC_VIBCH</name>